<gene>
    <name type="primary">nodQ</name>
</gene>
<sequence>MSYLQSVPPHDLAAHLADHDGKSVLRFITCGSVDDGKSTLIGRLLVDAKLVFEDQLTNLGRVGSSGAVNGGEIDLALLLDGLEAEREQGITIDVAYRYFATSKRKFIVADTPGHEEYTRNMVTGASTADLAVILIDSRQGILQQTRRHSYIASLLGIRHVVLAVNKIDLVEFRQSVFDEIARDYKAFAKKLGFASIQPIPIAARFGDNVISASPNTPWYKGPALLEYLETVQLDPPATERPFRFPVQLVMRPNANFRGYAGQIASGSVSVGDPVVIAKSGQRSSVKAIVTFDGNLTTAAEGEAVTLVLADEVDASRGNMLVAPAARPFVADQFQAHVIWFDANPMLPGRSYILRTETDSVSATVTALKHQVNINSFAREAAKSLQMNEVGVCNISTQAPIVFDAYKESRATGNFVFVDRVTNATVGAGMIDFPLRRADNVHWQATDVNKGARSAMKSQRPAVLWFTGLSGSGKSTIANALDRLLHARGKHTYMLDGDNVRHGLNRDLGFTEADRVENIRRVAEVAKLMADAGLIVLVSFISPFRGERRMARELMEEGEFIEIFVDTPLEECARRDPKALYEKALAGKIANFTGVSSPYEAPESPELHLKTVEEDPVALALKIEAFLDRHREEK</sequence>
<proteinExistence type="inferred from homology"/>
<organism>
    <name type="scientific">Rhizobium sp. (strain BR816)</name>
    <dbReference type="NCBI Taxonomy" id="1057002"/>
    <lineage>
        <taxon>Bacteria</taxon>
        <taxon>Pseudomonadati</taxon>
        <taxon>Pseudomonadota</taxon>
        <taxon>Alphaproteobacteria</taxon>
        <taxon>Hyphomicrobiales</taxon>
        <taxon>Rhizobiaceae</taxon>
        <taxon>Sinorhizobium/Ensifer group</taxon>
        <taxon>Ensifer</taxon>
    </lineage>
</organism>
<name>NODQ_RHISB</name>
<protein>
    <recommendedName>
        <fullName>Bifunctional enzyme NodQ</fullName>
    </recommendedName>
    <alternativeName>
        <fullName>Nodulation protein Q</fullName>
    </alternativeName>
    <domain>
        <recommendedName>
            <fullName>Sulfate adenylyltransferase subunit 1</fullName>
            <ecNumber>2.7.7.4</ecNumber>
        </recommendedName>
        <alternativeName>
            <fullName>ATP-sulfurylase large subunit</fullName>
        </alternativeName>
        <alternativeName>
            <fullName>Sulfate adenylate transferase</fullName>
            <shortName>SAT</shortName>
        </alternativeName>
    </domain>
    <domain>
        <recommendedName>
            <fullName>Adenylyl-sulfate kinase</fullName>
            <ecNumber>2.7.1.25</ecNumber>
        </recommendedName>
        <alternativeName>
            <fullName>APS kinase</fullName>
        </alternativeName>
        <alternativeName>
            <fullName>ATP adenosine-5'-phosphosulfate 3'-phosphotransferase</fullName>
        </alternativeName>
    </domain>
</protein>
<evidence type="ECO:0000250" key="1"/>
<evidence type="ECO:0000255" key="2"/>
<evidence type="ECO:0000305" key="3"/>
<dbReference type="EC" id="2.7.7.4"/>
<dbReference type="EC" id="2.7.1.25"/>
<dbReference type="EMBL" id="U59507">
    <property type="protein sequence ID" value="AAB95249.1"/>
    <property type="molecule type" value="Genomic_DNA"/>
</dbReference>
<dbReference type="SMR" id="O07309"/>
<dbReference type="GO" id="GO:0004020">
    <property type="term" value="F:adenylylsulfate kinase activity"/>
    <property type="evidence" value="ECO:0007669"/>
    <property type="project" value="UniProtKB-UniRule"/>
</dbReference>
<dbReference type="GO" id="GO:0005524">
    <property type="term" value="F:ATP binding"/>
    <property type="evidence" value="ECO:0007669"/>
    <property type="project" value="UniProtKB-UniRule"/>
</dbReference>
<dbReference type="GO" id="GO:0005525">
    <property type="term" value="F:GTP binding"/>
    <property type="evidence" value="ECO:0007669"/>
    <property type="project" value="UniProtKB-UniRule"/>
</dbReference>
<dbReference type="GO" id="GO:0003924">
    <property type="term" value="F:GTPase activity"/>
    <property type="evidence" value="ECO:0007669"/>
    <property type="project" value="InterPro"/>
</dbReference>
<dbReference type="GO" id="GO:0004781">
    <property type="term" value="F:sulfate adenylyltransferase (ATP) activity"/>
    <property type="evidence" value="ECO:0007669"/>
    <property type="project" value="UniProtKB-UniRule"/>
</dbReference>
<dbReference type="GO" id="GO:0070814">
    <property type="term" value="P:hydrogen sulfide biosynthetic process"/>
    <property type="evidence" value="ECO:0007669"/>
    <property type="project" value="UniProtKB-UniRule"/>
</dbReference>
<dbReference type="GO" id="GO:0000103">
    <property type="term" value="P:sulfate assimilation"/>
    <property type="evidence" value="ECO:0007669"/>
    <property type="project" value="UniProtKB-UniRule"/>
</dbReference>
<dbReference type="CDD" id="cd02027">
    <property type="entry name" value="APSK"/>
    <property type="match status" value="1"/>
</dbReference>
<dbReference type="CDD" id="cd04166">
    <property type="entry name" value="CysN_ATPS"/>
    <property type="match status" value="1"/>
</dbReference>
<dbReference type="CDD" id="cd03695">
    <property type="entry name" value="CysN_NodQ_II"/>
    <property type="match status" value="1"/>
</dbReference>
<dbReference type="CDD" id="cd04095">
    <property type="entry name" value="CysN_NoDQ_III"/>
    <property type="match status" value="1"/>
</dbReference>
<dbReference type="FunFam" id="3.40.50.300:FF:000212">
    <property type="entry name" value="Adenylyl-sulfate kinase"/>
    <property type="match status" value="1"/>
</dbReference>
<dbReference type="FunFam" id="3.40.50.300:FF:000119">
    <property type="entry name" value="Sulfate adenylyltransferase subunit 1"/>
    <property type="match status" value="1"/>
</dbReference>
<dbReference type="Gene3D" id="3.40.50.300">
    <property type="entry name" value="P-loop containing nucleotide triphosphate hydrolases"/>
    <property type="match status" value="2"/>
</dbReference>
<dbReference type="Gene3D" id="2.40.30.10">
    <property type="entry name" value="Translation factors"/>
    <property type="match status" value="2"/>
</dbReference>
<dbReference type="HAMAP" id="MF_00065">
    <property type="entry name" value="Adenylyl_sulf_kinase"/>
    <property type="match status" value="1"/>
</dbReference>
<dbReference type="HAMAP" id="MF_00062">
    <property type="entry name" value="Sulf_adenylyltr_sub1"/>
    <property type="match status" value="1"/>
</dbReference>
<dbReference type="InterPro" id="IPR002891">
    <property type="entry name" value="APS_kinase"/>
</dbReference>
<dbReference type="InterPro" id="IPR041757">
    <property type="entry name" value="CysN_GTP-bd"/>
</dbReference>
<dbReference type="InterPro" id="IPR044138">
    <property type="entry name" value="CysN_II"/>
</dbReference>
<dbReference type="InterPro" id="IPR044139">
    <property type="entry name" value="CysN_NoDQ_III"/>
</dbReference>
<dbReference type="InterPro" id="IPR031157">
    <property type="entry name" value="G_TR_CS"/>
</dbReference>
<dbReference type="InterPro" id="IPR054696">
    <property type="entry name" value="GTP-eEF1A_C"/>
</dbReference>
<dbReference type="InterPro" id="IPR027417">
    <property type="entry name" value="P-loop_NTPase"/>
</dbReference>
<dbReference type="InterPro" id="IPR011779">
    <property type="entry name" value="SO4_adenylTrfase_lsu"/>
</dbReference>
<dbReference type="InterPro" id="IPR000795">
    <property type="entry name" value="T_Tr_GTP-bd_dom"/>
</dbReference>
<dbReference type="InterPro" id="IPR050100">
    <property type="entry name" value="TRAFAC_GTPase_members"/>
</dbReference>
<dbReference type="InterPro" id="IPR009000">
    <property type="entry name" value="Transl_B-barrel_sf"/>
</dbReference>
<dbReference type="InterPro" id="IPR009001">
    <property type="entry name" value="Transl_elong_EF1A/Init_IF2_C"/>
</dbReference>
<dbReference type="NCBIfam" id="TIGR00455">
    <property type="entry name" value="apsK"/>
    <property type="match status" value="1"/>
</dbReference>
<dbReference type="NCBIfam" id="TIGR02034">
    <property type="entry name" value="CysN"/>
    <property type="match status" value="1"/>
</dbReference>
<dbReference type="NCBIfam" id="NF003013">
    <property type="entry name" value="PRK03846.1"/>
    <property type="match status" value="1"/>
</dbReference>
<dbReference type="NCBIfam" id="NF003478">
    <property type="entry name" value="PRK05124.1"/>
    <property type="match status" value="1"/>
</dbReference>
<dbReference type="NCBIfam" id="NF004035">
    <property type="entry name" value="PRK05506.1"/>
    <property type="match status" value="1"/>
</dbReference>
<dbReference type="PANTHER" id="PTHR23115">
    <property type="entry name" value="TRANSLATION FACTOR"/>
    <property type="match status" value="1"/>
</dbReference>
<dbReference type="Pfam" id="PF01583">
    <property type="entry name" value="APS_kinase"/>
    <property type="match status" value="1"/>
</dbReference>
<dbReference type="Pfam" id="PF22594">
    <property type="entry name" value="GTP-eEF1A_C"/>
    <property type="match status" value="1"/>
</dbReference>
<dbReference type="Pfam" id="PF00009">
    <property type="entry name" value="GTP_EFTU"/>
    <property type="match status" value="1"/>
</dbReference>
<dbReference type="PRINTS" id="PR00315">
    <property type="entry name" value="ELONGATNFCT"/>
</dbReference>
<dbReference type="SUPFAM" id="SSF50465">
    <property type="entry name" value="EF-Tu/eEF-1alpha/eIF2-gamma C-terminal domain"/>
    <property type="match status" value="1"/>
</dbReference>
<dbReference type="SUPFAM" id="SSF52540">
    <property type="entry name" value="P-loop containing nucleoside triphosphate hydrolases"/>
    <property type="match status" value="2"/>
</dbReference>
<dbReference type="SUPFAM" id="SSF50447">
    <property type="entry name" value="Translation proteins"/>
    <property type="match status" value="1"/>
</dbReference>
<dbReference type="PROSITE" id="PS00301">
    <property type="entry name" value="G_TR_1"/>
    <property type="match status" value="1"/>
</dbReference>
<dbReference type="PROSITE" id="PS51722">
    <property type="entry name" value="G_TR_2"/>
    <property type="match status" value="1"/>
</dbReference>
<keyword id="KW-0067">ATP-binding</keyword>
<keyword id="KW-0342">GTP-binding</keyword>
<keyword id="KW-0418">Kinase</keyword>
<keyword id="KW-0511">Multifunctional enzyme</keyword>
<keyword id="KW-0536">Nodulation</keyword>
<keyword id="KW-0547">Nucleotide-binding</keyword>
<keyword id="KW-0548">Nucleotidyltransferase</keyword>
<keyword id="KW-0808">Transferase</keyword>
<feature type="chain" id="PRO_0000091544" description="Bifunctional enzyme NodQ">
    <location>
        <begin position="1"/>
        <end position="633"/>
    </location>
</feature>
<feature type="domain" description="tr-type G">
    <location>
        <begin position="22"/>
        <end position="236"/>
    </location>
</feature>
<feature type="region of interest" description="Sulfate adenylyltransferase">
    <location>
        <begin position="1"/>
        <end position="458"/>
    </location>
</feature>
<feature type="region of interest" description="G1" evidence="1">
    <location>
        <begin position="31"/>
        <end position="38"/>
    </location>
</feature>
<feature type="region of interest" description="G2" evidence="1">
    <location>
        <begin position="89"/>
        <end position="93"/>
    </location>
</feature>
<feature type="region of interest" description="G3" evidence="1">
    <location>
        <begin position="110"/>
        <end position="113"/>
    </location>
</feature>
<feature type="region of interest" description="G4" evidence="1">
    <location>
        <begin position="165"/>
        <end position="168"/>
    </location>
</feature>
<feature type="region of interest" description="G5" evidence="1">
    <location>
        <begin position="202"/>
        <end position="204"/>
    </location>
</feature>
<feature type="region of interest" description="Adenylyl-sulfate kinase">
    <location>
        <begin position="459"/>
        <end position="633"/>
    </location>
</feature>
<feature type="active site" description="Phosphoserine intermediate" evidence="1">
    <location>
        <position position="541"/>
    </location>
</feature>
<feature type="binding site" evidence="1">
    <location>
        <begin position="31"/>
        <end position="38"/>
    </location>
    <ligand>
        <name>GTP</name>
        <dbReference type="ChEBI" id="CHEBI:37565"/>
    </ligand>
</feature>
<feature type="binding site" evidence="1">
    <location>
        <begin position="110"/>
        <end position="114"/>
    </location>
    <ligand>
        <name>GTP</name>
        <dbReference type="ChEBI" id="CHEBI:37565"/>
    </ligand>
</feature>
<feature type="binding site" evidence="1">
    <location>
        <begin position="165"/>
        <end position="168"/>
    </location>
    <ligand>
        <name>GTP</name>
        <dbReference type="ChEBI" id="CHEBI:37565"/>
    </ligand>
</feature>
<feature type="binding site" evidence="2">
    <location>
        <begin position="467"/>
        <end position="474"/>
    </location>
    <ligand>
        <name>ATP</name>
        <dbReference type="ChEBI" id="CHEBI:30616"/>
    </ligand>
</feature>
<reference key="1">
    <citation type="journal article" date="1997" name="Microbiology">
        <title>Functional redundancy of genes for sulphate activation enzymes in Rhizobium sp. BR816.</title>
        <authorList>
            <person name="Laeremans T."/>
            <person name="Coolsaet N."/>
            <person name="Verreth C."/>
            <person name="Snoeck C."/>
            <person name="Hellings N."/>
            <person name="Vanderleyden J."/>
            <person name="Martinez-Romero E."/>
        </authorList>
    </citation>
    <scope>NUCLEOTIDE SEQUENCE [GENOMIC DNA]</scope>
</reference>
<accession>O07309</accession>
<comment type="function">
    <text evidence="1">Proposed to provide activated sulfate for transfer to Nod factor. ATP sulfurylase may be the GTPase, regulating ATP sulfurylase activity (By similarity).</text>
</comment>
<comment type="function">
    <text evidence="1">APS kinase catalyzes the synthesis of activated sulfate.</text>
</comment>
<comment type="catalytic activity">
    <reaction>
        <text>sulfate + ATP + H(+) = adenosine 5'-phosphosulfate + diphosphate</text>
        <dbReference type="Rhea" id="RHEA:18133"/>
        <dbReference type="ChEBI" id="CHEBI:15378"/>
        <dbReference type="ChEBI" id="CHEBI:16189"/>
        <dbReference type="ChEBI" id="CHEBI:30616"/>
        <dbReference type="ChEBI" id="CHEBI:33019"/>
        <dbReference type="ChEBI" id="CHEBI:58243"/>
        <dbReference type="EC" id="2.7.7.4"/>
    </reaction>
</comment>
<comment type="catalytic activity">
    <reaction>
        <text>adenosine 5'-phosphosulfate + ATP = 3'-phosphoadenylyl sulfate + ADP + H(+)</text>
        <dbReference type="Rhea" id="RHEA:24152"/>
        <dbReference type="ChEBI" id="CHEBI:15378"/>
        <dbReference type="ChEBI" id="CHEBI:30616"/>
        <dbReference type="ChEBI" id="CHEBI:58243"/>
        <dbReference type="ChEBI" id="CHEBI:58339"/>
        <dbReference type="ChEBI" id="CHEBI:456216"/>
        <dbReference type="EC" id="2.7.1.25"/>
    </reaction>
</comment>
<comment type="subunit">
    <text evidence="3">Sulfate-activating enzymes, NodP and NodQ, may be physically associated.</text>
</comment>
<comment type="similarity">
    <text evidence="3">In the C-terminal section; belongs to the APS kinase family.</text>
</comment>
<comment type="similarity">
    <text evidence="3">In the N-terminal section; belongs to the TRAFAC class translation factor GTPase superfamily. Classic translation factor GTPase family. CysN/NodQ subfamily.</text>
</comment>